<name>NDHH_SYNJA</name>
<feature type="chain" id="PRO_0000371937" description="NAD(P)H-quinone oxidoreductase subunit H">
    <location>
        <begin position="1"/>
        <end position="394"/>
    </location>
</feature>
<proteinExistence type="inferred from homology"/>
<organism>
    <name type="scientific">Synechococcus sp. (strain JA-3-3Ab)</name>
    <name type="common">Cyanobacteria bacterium Yellowstone A-Prime</name>
    <dbReference type="NCBI Taxonomy" id="321327"/>
    <lineage>
        <taxon>Bacteria</taxon>
        <taxon>Bacillati</taxon>
        <taxon>Cyanobacteriota</taxon>
        <taxon>Cyanophyceae</taxon>
        <taxon>Synechococcales</taxon>
        <taxon>Synechococcaceae</taxon>
        <taxon>Synechococcus</taxon>
    </lineage>
</organism>
<reference key="1">
    <citation type="journal article" date="2007" name="ISME J.">
        <title>Population level functional diversity in a microbial community revealed by comparative genomic and metagenomic analyses.</title>
        <authorList>
            <person name="Bhaya D."/>
            <person name="Grossman A.R."/>
            <person name="Steunou A.-S."/>
            <person name="Khuri N."/>
            <person name="Cohan F.M."/>
            <person name="Hamamura N."/>
            <person name="Melendrez M.C."/>
            <person name="Bateson M.M."/>
            <person name="Ward D.M."/>
            <person name="Heidelberg J.F."/>
        </authorList>
    </citation>
    <scope>NUCLEOTIDE SEQUENCE [LARGE SCALE GENOMIC DNA]</scope>
    <source>
        <strain>JA-3-3Ab</strain>
    </source>
</reference>
<evidence type="ECO:0000255" key="1">
    <source>
        <dbReference type="HAMAP-Rule" id="MF_01358"/>
    </source>
</evidence>
<comment type="function">
    <text evidence="1">NDH-1 shuttles electrons from an unknown electron donor, via FMN and iron-sulfur (Fe-S) centers, to quinones in the respiratory and/or the photosynthetic chain. The immediate electron acceptor for the enzyme in this species is believed to be plastoquinone. Couples the redox reaction to proton translocation, and thus conserves the redox energy in a proton gradient. Cyanobacterial NDH-1 also plays a role in inorganic carbon-concentration.</text>
</comment>
<comment type="catalytic activity">
    <reaction evidence="1">
        <text>a plastoquinone + NADH + (n+1) H(+)(in) = a plastoquinol + NAD(+) + n H(+)(out)</text>
        <dbReference type="Rhea" id="RHEA:42608"/>
        <dbReference type="Rhea" id="RHEA-COMP:9561"/>
        <dbReference type="Rhea" id="RHEA-COMP:9562"/>
        <dbReference type="ChEBI" id="CHEBI:15378"/>
        <dbReference type="ChEBI" id="CHEBI:17757"/>
        <dbReference type="ChEBI" id="CHEBI:57540"/>
        <dbReference type="ChEBI" id="CHEBI:57945"/>
        <dbReference type="ChEBI" id="CHEBI:62192"/>
    </reaction>
</comment>
<comment type="catalytic activity">
    <reaction evidence="1">
        <text>a plastoquinone + NADPH + (n+1) H(+)(in) = a plastoquinol + NADP(+) + n H(+)(out)</text>
        <dbReference type="Rhea" id="RHEA:42612"/>
        <dbReference type="Rhea" id="RHEA-COMP:9561"/>
        <dbReference type="Rhea" id="RHEA-COMP:9562"/>
        <dbReference type="ChEBI" id="CHEBI:15378"/>
        <dbReference type="ChEBI" id="CHEBI:17757"/>
        <dbReference type="ChEBI" id="CHEBI:57783"/>
        <dbReference type="ChEBI" id="CHEBI:58349"/>
        <dbReference type="ChEBI" id="CHEBI:62192"/>
    </reaction>
</comment>
<comment type="subunit">
    <text evidence="1">NDH-1 can be composed of about 15 different subunits; different subcomplexes with different compositions have been identified which probably have different functions.</text>
</comment>
<comment type="subcellular location">
    <subcellularLocation>
        <location evidence="1">Cellular thylakoid membrane</location>
        <topology evidence="1">Peripheral membrane protein</topology>
        <orientation evidence="1">Cytoplasmic side</orientation>
    </subcellularLocation>
</comment>
<comment type="similarity">
    <text evidence="1">Belongs to the complex I 49 kDa subunit family.</text>
</comment>
<accession>Q2JWB1</accession>
<keyword id="KW-0472">Membrane</keyword>
<keyword id="KW-0520">NAD</keyword>
<keyword id="KW-0521">NADP</keyword>
<keyword id="KW-0618">Plastoquinone</keyword>
<keyword id="KW-0874">Quinone</keyword>
<keyword id="KW-0793">Thylakoid</keyword>
<keyword id="KW-1278">Translocase</keyword>
<keyword id="KW-0813">Transport</keyword>
<sequence length="394" mass="45251">MPMIETRTDRMLLNFGPHHPSMHGVLRLLVTLDGENIVDCEPVIGYLHRGMEKIAENRTVVQYLPYVSRWDYGAGMFNEAITVNAVEKLAGIPVPRRASYLRVIMLELTRITNHLLWFGPFLADLGAQTPFLYAMREREWILDLFEAVTGMRLINNNYFRVGGVAVDLPYGWTEKCLDFCEYFLPKVDEYERLVTDNPIFRRRLEGIGVISKQDAINWGLSGPMLRACGVNWDLRKVDHYECYDDFDWEVAVYPEGDCLARYRVRMKEMRESCKIVQQAVKALPGGPFENLEAKRMLEGPKSEWNKGDYQFISKKPSANFKIPKGEAYVRVESAKGELGIYIVGDDNVCPWRWKIRPPGFVNLQVLPQLIRGMKVADMIAILGSIDIIMGEVDR</sequence>
<gene>
    <name evidence="1" type="primary">ndhH</name>
    <name type="ordered locus">CYA_0747</name>
</gene>
<dbReference type="EC" id="7.1.1.-" evidence="1"/>
<dbReference type="EMBL" id="CP000239">
    <property type="protein sequence ID" value="ABC98957.1"/>
    <property type="molecule type" value="Genomic_DNA"/>
</dbReference>
<dbReference type="RefSeq" id="WP_011429641.1">
    <property type="nucleotide sequence ID" value="NC_007775.1"/>
</dbReference>
<dbReference type="SMR" id="Q2JWB1"/>
<dbReference type="STRING" id="321327.CYA_0747"/>
<dbReference type="KEGG" id="cya:CYA_0747"/>
<dbReference type="eggNOG" id="COG0649">
    <property type="taxonomic scope" value="Bacteria"/>
</dbReference>
<dbReference type="HOGENOM" id="CLU_015134_1_2_3"/>
<dbReference type="OrthoDB" id="9801496at2"/>
<dbReference type="Proteomes" id="UP000008818">
    <property type="component" value="Chromosome"/>
</dbReference>
<dbReference type="GO" id="GO:0031676">
    <property type="term" value="C:plasma membrane-derived thylakoid membrane"/>
    <property type="evidence" value="ECO:0007669"/>
    <property type="project" value="UniProtKB-SubCell"/>
</dbReference>
<dbReference type="GO" id="GO:0051287">
    <property type="term" value="F:NAD binding"/>
    <property type="evidence" value="ECO:0007669"/>
    <property type="project" value="InterPro"/>
</dbReference>
<dbReference type="GO" id="GO:0016655">
    <property type="term" value="F:oxidoreductase activity, acting on NAD(P)H, quinone or similar compound as acceptor"/>
    <property type="evidence" value="ECO:0007669"/>
    <property type="project" value="UniProtKB-UniRule"/>
</dbReference>
<dbReference type="GO" id="GO:0048038">
    <property type="term" value="F:quinone binding"/>
    <property type="evidence" value="ECO:0007669"/>
    <property type="project" value="UniProtKB-KW"/>
</dbReference>
<dbReference type="GO" id="GO:0019684">
    <property type="term" value="P:photosynthesis, light reaction"/>
    <property type="evidence" value="ECO:0007669"/>
    <property type="project" value="UniProtKB-UniRule"/>
</dbReference>
<dbReference type="Gene3D" id="1.10.645.10">
    <property type="entry name" value="Cytochrome-c3 Hydrogenase, chain B"/>
    <property type="match status" value="1"/>
</dbReference>
<dbReference type="HAMAP" id="MF_01358">
    <property type="entry name" value="NDH1_NuoD"/>
    <property type="match status" value="1"/>
</dbReference>
<dbReference type="InterPro" id="IPR001135">
    <property type="entry name" value="NADH_Q_OxRdtase_suD"/>
</dbReference>
<dbReference type="InterPro" id="IPR014029">
    <property type="entry name" value="NADH_UbQ_OxRdtase_49kDa_CS"/>
</dbReference>
<dbReference type="InterPro" id="IPR022885">
    <property type="entry name" value="NDH1_su_D/H"/>
</dbReference>
<dbReference type="InterPro" id="IPR029014">
    <property type="entry name" value="NiFe-Hase_large"/>
</dbReference>
<dbReference type="NCBIfam" id="TIGR01962">
    <property type="entry name" value="NuoD"/>
    <property type="match status" value="1"/>
</dbReference>
<dbReference type="NCBIfam" id="NF004739">
    <property type="entry name" value="PRK06075.1"/>
    <property type="match status" value="1"/>
</dbReference>
<dbReference type="NCBIfam" id="NF005649">
    <property type="entry name" value="PRK07415.1"/>
    <property type="match status" value="1"/>
</dbReference>
<dbReference type="PANTHER" id="PTHR11993:SF10">
    <property type="entry name" value="NADH DEHYDROGENASE [UBIQUINONE] IRON-SULFUR PROTEIN 2, MITOCHONDRIAL"/>
    <property type="match status" value="1"/>
</dbReference>
<dbReference type="PANTHER" id="PTHR11993">
    <property type="entry name" value="NADH-UBIQUINONE OXIDOREDUCTASE 49 KDA SUBUNIT"/>
    <property type="match status" value="1"/>
</dbReference>
<dbReference type="Pfam" id="PF00346">
    <property type="entry name" value="Complex1_49kDa"/>
    <property type="match status" value="1"/>
</dbReference>
<dbReference type="SUPFAM" id="SSF56762">
    <property type="entry name" value="HydB/Nqo4-like"/>
    <property type="match status" value="1"/>
</dbReference>
<dbReference type="PROSITE" id="PS00535">
    <property type="entry name" value="COMPLEX1_49K"/>
    <property type="match status" value="1"/>
</dbReference>
<protein>
    <recommendedName>
        <fullName evidence="1">NAD(P)H-quinone oxidoreductase subunit H</fullName>
        <ecNumber evidence="1">7.1.1.-</ecNumber>
    </recommendedName>
    <alternativeName>
        <fullName>NAD(P)H dehydrogenase subunit H</fullName>
    </alternativeName>
    <alternativeName>
        <fullName evidence="1">NADH-plastoquinone oxidoreductase subunit H</fullName>
    </alternativeName>
    <alternativeName>
        <fullName evidence="1">NDH-1 subunit H</fullName>
        <shortName evidence="1">NDH-H</shortName>
    </alternativeName>
</protein>